<feature type="chain" id="PRO_0000350939" description="Cell division cycle protein 123">
    <location>
        <begin position="1"/>
        <end position="419"/>
    </location>
</feature>
<feature type="region of interest" description="Disordered" evidence="2">
    <location>
        <begin position="1"/>
        <end position="23"/>
    </location>
</feature>
<feature type="region of interest" description="Disordered" evidence="2">
    <location>
        <begin position="73"/>
        <end position="102"/>
    </location>
</feature>
<feature type="region of interest" description="Disordered" evidence="2">
    <location>
        <begin position="328"/>
        <end position="351"/>
    </location>
</feature>
<feature type="compositionally biased region" description="Polar residues" evidence="2">
    <location>
        <begin position="7"/>
        <end position="18"/>
    </location>
</feature>
<feature type="compositionally biased region" description="Acidic residues" evidence="2">
    <location>
        <begin position="78"/>
        <end position="99"/>
    </location>
</feature>
<feature type="compositionally biased region" description="Acidic residues" evidence="2">
    <location>
        <begin position="328"/>
        <end position="350"/>
    </location>
</feature>
<name>CD123_ASPTN</name>
<proteinExistence type="inferred from homology"/>
<accession>Q0CH08</accession>
<sequence length="419" mass="47452">MPHIESEQQPLAESSNEQPLERLPFPPVTYSHILHCSYHHWQPLYRNITPRSCAIPLSPAFVSYLRADGIVLPPEDATPTDDDNLDTFSEDSSSEEPDPSTEWKEIHAQIKSTIADFGGKVTPKLNWSAPKDATWMAATNDLQCRTPNDIYLLLKSSDFVTHDLEHPFDGCVPDADPGATASDAPTPEVPYHLVLRKYVNFNPSLEFRCFVRNRVLLCLCQRDQNHFDFLFPMRDALRSRIQAFFDEKLRDSFPDPNFVFDVYVPAPHQRVWLVDINPWAVRTDPLLFSWLEILQMKDPIGIREAEEGAEEQFVRLALNGSNAAALEAELDEGSTSESEEELDDEADDDSPFLPEFRLIKRDDPEAYAFTTPQYSAHKLPKEVVDASLSGPGGMSEFLGKWQDILAKQAQESDSENEAQ</sequence>
<keyword id="KW-0131">Cell cycle</keyword>
<keyword id="KW-0132">Cell division</keyword>
<keyword id="KW-0963">Cytoplasm</keyword>
<keyword id="KW-1185">Reference proteome</keyword>
<protein>
    <recommendedName>
        <fullName>Cell division cycle protein 123</fullName>
    </recommendedName>
</protein>
<dbReference type="EMBL" id="CH476603">
    <property type="protein sequence ID" value="EAU32418.1"/>
    <property type="molecule type" value="Genomic_DNA"/>
</dbReference>
<dbReference type="RefSeq" id="XP_001209720.1">
    <property type="nucleotide sequence ID" value="XM_001209720.1"/>
</dbReference>
<dbReference type="SMR" id="Q0CH08"/>
<dbReference type="STRING" id="341663.Q0CH08"/>
<dbReference type="EnsemblFungi" id="EAU32418">
    <property type="protein sequence ID" value="EAU32418"/>
    <property type="gene ID" value="ATEG_07034"/>
</dbReference>
<dbReference type="GeneID" id="4319179"/>
<dbReference type="VEuPathDB" id="FungiDB:ATEG_07034"/>
<dbReference type="eggNOG" id="KOG2983">
    <property type="taxonomic scope" value="Eukaryota"/>
</dbReference>
<dbReference type="HOGENOM" id="CLU_034402_2_0_1"/>
<dbReference type="OMA" id="TFPDPNF"/>
<dbReference type="OrthoDB" id="360540at2759"/>
<dbReference type="Proteomes" id="UP000007963">
    <property type="component" value="Unassembled WGS sequence"/>
</dbReference>
<dbReference type="GO" id="GO:0005737">
    <property type="term" value="C:cytoplasm"/>
    <property type="evidence" value="ECO:0007669"/>
    <property type="project" value="UniProtKB-SubCell"/>
</dbReference>
<dbReference type="GO" id="GO:0051301">
    <property type="term" value="P:cell division"/>
    <property type="evidence" value="ECO:0007669"/>
    <property type="project" value="UniProtKB-KW"/>
</dbReference>
<dbReference type="InterPro" id="IPR009772">
    <property type="entry name" value="CDC123"/>
</dbReference>
<dbReference type="PANTHER" id="PTHR15323:SF6">
    <property type="entry name" value="CELL DIVISION CYCLE PROTEIN 123 HOMOLOG"/>
    <property type="match status" value="1"/>
</dbReference>
<dbReference type="PANTHER" id="PTHR15323">
    <property type="entry name" value="D123 PROTEIN"/>
    <property type="match status" value="1"/>
</dbReference>
<dbReference type="Pfam" id="PF07065">
    <property type="entry name" value="D123"/>
    <property type="match status" value="1"/>
</dbReference>
<organism>
    <name type="scientific">Aspergillus terreus (strain NIH 2624 / FGSC A1156)</name>
    <dbReference type="NCBI Taxonomy" id="341663"/>
    <lineage>
        <taxon>Eukaryota</taxon>
        <taxon>Fungi</taxon>
        <taxon>Dikarya</taxon>
        <taxon>Ascomycota</taxon>
        <taxon>Pezizomycotina</taxon>
        <taxon>Eurotiomycetes</taxon>
        <taxon>Eurotiomycetidae</taxon>
        <taxon>Eurotiales</taxon>
        <taxon>Aspergillaceae</taxon>
        <taxon>Aspergillus</taxon>
        <taxon>Aspergillus subgen. Circumdati</taxon>
    </lineage>
</organism>
<evidence type="ECO:0000250" key="1"/>
<evidence type="ECO:0000256" key="2">
    <source>
        <dbReference type="SAM" id="MobiDB-lite"/>
    </source>
</evidence>
<evidence type="ECO:0000305" key="3"/>
<reference key="1">
    <citation type="submission" date="2005-09" db="EMBL/GenBank/DDBJ databases">
        <title>Annotation of the Aspergillus terreus NIH2624 genome.</title>
        <authorList>
            <person name="Birren B.W."/>
            <person name="Lander E.S."/>
            <person name="Galagan J.E."/>
            <person name="Nusbaum C."/>
            <person name="Devon K."/>
            <person name="Henn M."/>
            <person name="Ma L.-J."/>
            <person name="Jaffe D.B."/>
            <person name="Butler J."/>
            <person name="Alvarez P."/>
            <person name="Gnerre S."/>
            <person name="Grabherr M."/>
            <person name="Kleber M."/>
            <person name="Mauceli E.W."/>
            <person name="Brockman W."/>
            <person name="Rounsley S."/>
            <person name="Young S.K."/>
            <person name="LaButti K."/>
            <person name="Pushparaj V."/>
            <person name="DeCaprio D."/>
            <person name="Crawford M."/>
            <person name="Koehrsen M."/>
            <person name="Engels R."/>
            <person name="Montgomery P."/>
            <person name="Pearson M."/>
            <person name="Howarth C."/>
            <person name="Larson L."/>
            <person name="Luoma S."/>
            <person name="White J."/>
            <person name="Alvarado L."/>
            <person name="Kodira C.D."/>
            <person name="Zeng Q."/>
            <person name="Oleary S."/>
            <person name="Yandava C."/>
            <person name="Denning D.W."/>
            <person name="Nierman W.C."/>
            <person name="Milne T."/>
            <person name="Madden K."/>
        </authorList>
    </citation>
    <scope>NUCLEOTIDE SEQUENCE [LARGE SCALE GENOMIC DNA]</scope>
    <source>
        <strain>NIH 2624 / FGSC A1156</strain>
    </source>
</reference>
<comment type="function">
    <text evidence="1">Regulates the cell cycle in a nutrient dependent manner.</text>
</comment>
<comment type="subcellular location">
    <subcellularLocation>
        <location evidence="1">Cytoplasm</location>
    </subcellularLocation>
</comment>
<comment type="similarity">
    <text evidence="3">Belongs to the CDC123 family.</text>
</comment>
<gene>
    <name type="primary">cdc123</name>
    <name type="ORF">ATEG_07034</name>
</gene>